<gene>
    <name evidence="1" type="primary">nfuA</name>
    <name type="ordered locus">EcHS_A3611</name>
</gene>
<reference key="1">
    <citation type="journal article" date="2008" name="J. Bacteriol.">
        <title>The pangenome structure of Escherichia coli: comparative genomic analysis of E. coli commensal and pathogenic isolates.</title>
        <authorList>
            <person name="Rasko D.A."/>
            <person name="Rosovitz M.J."/>
            <person name="Myers G.S.A."/>
            <person name="Mongodin E.F."/>
            <person name="Fricke W.F."/>
            <person name="Gajer P."/>
            <person name="Crabtree J."/>
            <person name="Sebaihia M."/>
            <person name="Thomson N.R."/>
            <person name="Chaudhuri R."/>
            <person name="Henderson I.R."/>
            <person name="Sperandio V."/>
            <person name="Ravel J."/>
        </authorList>
    </citation>
    <scope>NUCLEOTIDE SEQUENCE [LARGE SCALE GENOMIC DNA]</scope>
    <source>
        <strain>HS</strain>
    </source>
</reference>
<comment type="function">
    <text evidence="1">Involved in iron-sulfur cluster biogenesis. Binds a 4Fe-4S cluster, can transfer this cluster to apoproteins, and thereby intervenes in the maturation of Fe/S proteins. Could also act as a scaffold/chaperone for damaged Fe/S proteins.</text>
</comment>
<comment type="cofactor">
    <cofactor evidence="1">
        <name>[4Fe-4S] cluster</name>
        <dbReference type="ChEBI" id="CHEBI:49883"/>
    </cofactor>
    <text evidence="1">Binds 1 [4Fe-4S] cluster per subunit. The cluster is presumably bound at the interface of two monomers.</text>
</comment>
<comment type="subunit">
    <text evidence="1">Homodimer.</text>
</comment>
<comment type="similarity">
    <text evidence="1">Belongs to the NfuA family.</text>
</comment>
<organism>
    <name type="scientific">Escherichia coli O9:H4 (strain HS)</name>
    <dbReference type="NCBI Taxonomy" id="331112"/>
    <lineage>
        <taxon>Bacteria</taxon>
        <taxon>Pseudomonadati</taxon>
        <taxon>Pseudomonadota</taxon>
        <taxon>Gammaproteobacteria</taxon>
        <taxon>Enterobacterales</taxon>
        <taxon>Enterobacteriaceae</taxon>
        <taxon>Escherichia</taxon>
    </lineage>
</organism>
<protein>
    <recommendedName>
        <fullName evidence="1">Fe/S biogenesis protein NfuA</fullName>
    </recommendedName>
</protein>
<accession>A8A5M2</accession>
<keyword id="KW-0004">4Fe-4S</keyword>
<keyword id="KW-0408">Iron</keyword>
<keyword id="KW-0411">Iron-sulfur</keyword>
<keyword id="KW-0479">Metal-binding</keyword>
<dbReference type="EMBL" id="CP000802">
    <property type="protein sequence ID" value="ABV07826.1"/>
    <property type="molecule type" value="Genomic_DNA"/>
</dbReference>
<dbReference type="RefSeq" id="WP_000619389.1">
    <property type="nucleotide sequence ID" value="NC_009800.1"/>
</dbReference>
<dbReference type="SMR" id="A8A5M2"/>
<dbReference type="GeneID" id="93778582"/>
<dbReference type="KEGG" id="ecx:EcHS_A3611"/>
<dbReference type="HOGENOM" id="CLU_094569_0_0_6"/>
<dbReference type="GO" id="GO:0051539">
    <property type="term" value="F:4 iron, 4 sulfur cluster binding"/>
    <property type="evidence" value="ECO:0007669"/>
    <property type="project" value="UniProtKB-UniRule"/>
</dbReference>
<dbReference type="GO" id="GO:0005506">
    <property type="term" value="F:iron ion binding"/>
    <property type="evidence" value="ECO:0007669"/>
    <property type="project" value="InterPro"/>
</dbReference>
<dbReference type="GO" id="GO:0016226">
    <property type="term" value="P:iron-sulfur cluster assembly"/>
    <property type="evidence" value="ECO:0007669"/>
    <property type="project" value="UniProtKB-UniRule"/>
</dbReference>
<dbReference type="GO" id="GO:0051604">
    <property type="term" value="P:protein maturation"/>
    <property type="evidence" value="ECO:0007669"/>
    <property type="project" value="UniProtKB-UniRule"/>
</dbReference>
<dbReference type="FunFam" id="2.60.300.12:FF:000004">
    <property type="entry name" value="Fe/S biogenesis protein NfuA"/>
    <property type="match status" value="1"/>
</dbReference>
<dbReference type="FunFam" id="3.30.300.130:FF:000002">
    <property type="entry name" value="Fe/S biogenesis protein NfuA"/>
    <property type="match status" value="1"/>
</dbReference>
<dbReference type="Gene3D" id="3.30.300.130">
    <property type="entry name" value="Fe-S cluster assembly (FSCA)"/>
    <property type="match status" value="1"/>
</dbReference>
<dbReference type="Gene3D" id="2.60.300.12">
    <property type="entry name" value="HesB-like domain"/>
    <property type="match status" value="1"/>
</dbReference>
<dbReference type="HAMAP" id="MF_01637">
    <property type="entry name" value="Fe_S_biogen_NfuA"/>
    <property type="match status" value="1"/>
</dbReference>
<dbReference type="InterPro" id="IPR017726">
    <property type="entry name" value="Fe/S_biogenesis_protein_NfuA"/>
</dbReference>
<dbReference type="InterPro" id="IPR000361">
    <property type="entry name" value="FeS_biogenesis"/>
</dbReference>
<dbReference type="InterPro" id="IPR034904">
    <property type="entry name" value="FSCA_dom_sf"/>
</dbReference>
<dbReference type="InterPro" id="IPR035903">
    <property type="entry name" value="HesB-like_dom_sf"/>
</dbReference>
<dbReference type="InterPro" id="IPR001075">
    <property type="entry name" value="NIF_FeS_clus_asmbl_NifU_C"/>
</dbReference>
<dbReference type="NCBIfam" id="NF008392">
    <property type="entry name" value="PRK11190.1"/>
    <property type="match status" value="1"/>
</dbReference>
<dbReference type="NCBIfam" id="TIGR03341">
    <property type="entry name" value="YhgI_GntY"/>
    <property type="match status" value="1"/>
</dbReference>
<dbReference type="PANTHER" id="PTHR11178:SF51">
    <property type="entry name" value="FE_S BIOGENESIS PROTEIN NFUA"/>
    <property type="match status" value="1"/>
</dbReference>
<dbReference type="PANTHER" id="PTHR11178">
    <property type="entry name" value="IRON-SULFUR CLUSTER SCAFFOLD PROTEIN NFU-RELATED"/>
    <property type="match status" value="1"/>
</dbReference>
<dbReference type="Pfam" id="PF01521">
    <property type="entry name" value="Fe-S_biosyn"/>
    <property type="match status" value="1"/>
</dbReference>
<dbReference type="Pfam" id="PF01106">
    <property type="entry name" value="NifU"/>
    <property type="match status" value="1"/>
</dbReference>
<dbReference type="SUPFAM" id="SSF117916">
    <property type="entry name" value="Fe-S cluster assembly (FSCA) domain-like"/>
    <property type="match status" value="1"/>
</dbReference>
<dbReference type="SUPFAM" id="SSF89360">
    <property type="entry name" value="HesB-like domain"/>
    <property type="match status" value="1"/>
</dbReference>
<sequence>MIRISDAAQAHFAKLLANQEEGTQIRVFVINPGTPNAECGVSYCPPDAVEATDTALKFDLLTAYVDELSAPYLEDAEIDFVTDQLGSQLTLKAPNAKMRKVADDAPLMERVEYMLQSQINPQLAGHGGRVSLMEITEDGYAILQFGGGCNGCSMVDVTLKEGIEKQLLNEFPELKGVRDLTEHQRGEHSYY</sequence>
<feature type="chain" id="PRO_1000069868" description="Fe/S biogenesis protein NfuA">
    <location>
        <begin position="1"/>
        <end position="191"/>
    </location>
</feature>
<feature type="binding site" evidence="1">
    <location>
        <position position="149"/>
    </location>
    <ligand>
        <name>[4Fe-4S] cluster</name>
        <dbReference type="ChEBI" id="CHEBI:49883"/>
    </ligand>
</feature>
<feature type="binding site" evidence="1">
    <location>
        <position position="152"/>
    </location>
    <ligand>
        <name>[4Fe-4S] cluster</name>
        <dbReference type="ChEBI" id="CHEBI:49883"/>
    </ligand>
</feature>
<name>NFUA_ECOHS</name>
<evidence type="ECO:0000255" key="1">
    <source>
        <dbReference type="HAMAP-Rule" id="MF_01637"/>
    </source>
</evidence>
<proteinExistence type="inferred from homology"/>